<name>DNAK_AZOSB</name>
<proteinExistence type="inferred from homology"/>
<reference key="1">
    <citation type="journal article" date="2006" name="Nat. Biotechnol.">
        <title>Complete genome of the mutualistic, N2-fixing grass endophyte Azoarcus sp. strain BH72.</title>
        <authorList>
            <person name="Krause A."/>
            <person name="Ramakumar A."/>
            <person name="Bartels D."/>
            <person name="Battistoni F."/>
            <person name="Bekel T."/>
            <person name="Boch J."/>
            <person name="Boehm M."/>
            <person name="Friedrich F."/>
            <person name="Hurek T."/>
            <person name="Krause L."/>
            <person name="Linke B."/>
            <person name="McHardy A.C."/>
            <person name="Sarkar A."/>
            <person name="Schneiker S."/>
            <person name="Syed A.A."/>
            <person name="Thauer R."/>
            <person name="Vorhoelter F.-J."/>
            <person name="Weidner S."/>
            <person name="Puehler A."/>
            <person name="Reinhold-Hurek B."/>
            <person name="Kaiser O."/>
            <person name="Goesmann A."/>
        </authorList>
    </citation>
    <scope>NUCLEOTIDE SEQUENCE [LARGE SCALE GENOMIC DNA]</scope>
    <source>
        <strain>BH72</strain>
    </source>
</reference>
<organism>
    <name type="scientific">Azoarcus sp. (strain BH72)</name>
    <dbReference type="NCBI Taxonomy" id="418699"/>
    <lineage>
        <taxon>Bacteria</taxon>
        <taxon>Pseudomonadati</taxon>
        <taxon>Pseudomonadota</taxon>
        <taxon>Betaproteobacteria</taxon>
        <taxon>Rhodocyclales</taxon>
        <taxon>Zoogloeaceae</taxon>
        <taxon>Azoarcus</taxon>
    </lineage>
</organism>
<gene>
    <name evidence="1" type="primary">dnaK</name>
    <name type="ordered locus">azo1063</name>
</gene>
<evidence type="ECO:0000255" key="1">
    <source>
        <dbReference type="HAMAP-Rule" id="MF_00332"/>
    </source>
</evidence>
<evidence type="ECO:0000256" key="2">
    <source>
        <dbReference type="SAM" id="MobiDB-lite"/>
    </source>
</evidence>
<comment type="function">
    <text evidence="1">Acts as a chaperone.</text>
</comment>
<comment type="induction">
    <text evidence="1">By stress conditions e.g. heat shock.</text>
</comment>
<comment type="similarity">
    <text evidence="1">Belongs to the heat shock protein 70 family.</text>
</comment>
<dbReference type="EMBL" id="AM406670">
    <property type="protein sequence ID" value="CAL93680.1"/>
    <property type="molecule type" value="Genomic_DNA"/>
</dbReference>
<dbReference type="RefSeq" id="WP_011764797.1">
    <property type="nucleotide sequence ID" value="NC_008702.1"/>
</dbReference>
<dbReference type="SMR" id="A1K4C5"/>
<dbReference type="STRING" id="62928.azo1063"/>
<dbReference type="KEGG" id="azo:azo1063"/>
<dbReference type="eggNOG" id="COG0443">
    <property type="taxonomic scope" value="Bacteria"/>
</dbReference>
<dbReference type="HOGENOM" id="CLU_005965_2_1_4"/>
<dbReference type="Proteomes" id="UP000002588">
    <property type="component" value="Chromosome"/>
</dbReference>
<dbReference type="GO" id="GO:0005524">
    <property type="term" value="F:ATP binding"/>
    <property type="evidence" value="ECO:0007669"/>
    <property type="project" value="UniProtKB-UniRule"/>
</dbReference>
<dbReference type="GO" id="GO:0140662">
    <property type="term" value="F:ATP-dependent protein folding chaperone"/>
    <property type="evidence" value="ECO:0007669"/>
    <property type="project" value="InterPro"/>
</dbReference>
<dbReference type="GO" id="GO:0051082">
    <property type="term" value="F:unfolded protein binding"/>
    <property type="evidence" value="ECO:0007669"/>
    <property type="project" value="InterPro"/>
</dbReference>
<dbReference type="CDD" id="cd10234">
    <property type="entry name" value="ASKHA_NBD_HSP70_DnaK-like"/>
    <property type="match status" value="1"/>
</dbReference>
<dbReference type="FunFam" id="2.60.34.10:FF:000014">
    <property type="entry name" value="Chaperone protein DnaK HSP70"/>
    <property type="match status" value="1"/>
</dbReference>
<dbReference type="FunFam" id="3.30.30.30:FF:000003">
    <property type="entry name" value="Heat shock protein 9"/>
    <property type="match status" value="1"/>
</dbReference>
<dbReference type="FunFam" id="1.20.1270.10:FF:000001">
    <property type="entry name" value="Molecular chaperone DnaK"/>
    <property type="match status" value="1"/>
</dbReference>
<dbReference type="FunFam" id="3.30.420.40:FF:000004">
    <property type="entry name" value="Molecular chaperone DnaK"/>
    <property type="match status" value="1"/>
</dbReference>
<dbReference type="FunFam" id="3.90.640.10:FF:000003">
    <property type="entry name" value="Molecular chaperone DnaK"/>
    <property type="match status" value="1"/>
</dbReference>
<dbReference type="Gene3D" id="1.20.1270.10">
    <property type="match status" value="1"/>
</dbReference>
<dbReference type="Gene3D" id="3.30.420.40">
    <property type="match status" value="2"/>
</dbReference>
<dbReference type="Gene3D" id="3.90.640.10">
    <property type="entry name" value="Actin, Chain A, domain 4"/>
    <property type="match status" value="1"/>
</dbReference>
<dbReference type="Gene3D" id="2.60.34.10">
    <property type="entry name" value="Substrate Binding Domain Of DNAk, Chain A, domain 1"/>
    <property type="match status" value="1"/>
</dbReference>
<dbReference type="HAMAP" id="MF_00332">
    <property type="entry name" value="DnaK"/>
    <property type="match status" value="1"/>
</dbReference>
<dbReference type="InterPro" id="IPR043129">
    <property type="entry name" value="ATPase_NBD"/>
</dbReference>
<dbReference type="InterPro" id="IPR012725">
    <property type="entry name" value="Chaperone_DnaK"/>
</dbReference>
<dbReference type="InterPro" id="IPR018181">
    <property type="entry name" value="Heat_shock_70_CS"/>
</dbReference>
<dbReference type="InterPro" id="IPR029048">
    <property type="entry name" value="HSP70_C_sf"/>
</dbReference>
<dbReference type="InterPro" id="IPR029047">
    <property type="entry name" value="HSP70_peptide-bd_sf"/>
</dbReference>
<dbReference type="InterPro" id="IPR013126">
    <property type="entry name" value="Hsp_70_fam"/>
</dbReference>
<dbReference type="NCBIfam" id="NF001413">
    <property type="entry name" value="PRK00290.1"/>
    <property type="match status" value="1"/>
</dbReference>
<dbReference type="NCBIfam" id="NF003520">
    <property type="entry name" value="PRK05183.1"/>
    <property type="match status" value="1"/>
</dbReference>
<dbReference type="NCBIfam" id="TIGR02350">
    <property type="entry name" value="prok_dnaK"/>
    <property type="match status" value="1"/>
</dbReference>
<dbReference type="PANTHER" id="PTHR19375">
    <property type="entry name" value="HEAT SHOCK PROTEIN 70KDA"/>
    <property type="match status" value="1"/>
</dbReference>
<dbReference type="Pfam" id="PF00012">
    <property type="entry name" value="HSP70"/>
    <property type="match status" value="1"/>
</dbReference>
<dbReference type="PRINTS" id="PR00301">
    <property type="entry name" value="HEATSHOCK70"/>
</dbReference>
<dbReference type="SUPFAM" id="SSF53067">
    <property type="entry name" value="Actin-like ATPase domain"/>
    <property type="match status" value="2"/>
</dbReference>
<dbReference type="SUPFAM" id="SSF100934">
    <property type="entry name" value="Heat shock protein 70kD (HSP70), C-terminal subdomain"/>
    <property type="match status" value="1"/>
</dbReference>
<dbReference type="SUPFAM" id="SSF100920">
    <property type="entry name" value="Heat shock protein 70kD (HSP70), peptide-binding domain"/>
    <property type="match status" value="1"/>
</dbReference>
<dbReference type="PROSITE" id="PS00297">
    <property type="entry name" value="HSP70_1"/>
    <property type="match status" value="1"/>
</dbReference>
<dbReference type="PROSITE" id="PS00329">
    <property type="entry name" value="HSP70_2"/>
    <property type="match status" value="1"/>
</dbReference>
<dbReference type="PROSITE" id="PS01036">
    <property type="entry name" value="HSP70_3"/>
    <property type="match status" value="1"/>
</dbReference>
<feature type="chain" id="PRO_1000059507" description="Chaperone protein DnaK">
    <location>
        <begin position="1"/>
        <end position="641"/>
    </location>
</feature>
<feature type="region of interest" description="Disordered" evidence="2">
    <location>
        <begin position="603"/>
        <end position="627"/>
    </location>
</feature>
<feature type="compositionally biased region" description="Low complexity" evidence="2">
    <location>
        <begin position="604"/>
        <end position="616"/>
    </location>
</feature>
<feature type="modified residue" description="Phosphothreonine; by autocatalysis" evidence="1">
    <location>
        <position position="199"/>
    </location>
</feature>
<protein>
    <recommendedName>
        <fullName evidence="1">Chaperone protein DnaK</fullName>
    </recommendedName>
    <alternativeName>
        <fullName evidence="1">HSP70</fullName>
    </alternativeName>
    <alternativeName>
        <fullName evidence="1">Heat shock 70 kDa protein</fullName>
    </alternativeName>
    <alternativeName>
        <fullName evidence="1">Heat shock protein 70</fullName>
    </alternativeName>
</protein>
<sequence>MGKIIGIDLGTTNSCVSVMEGGKPKVIENSEGARTTPSVVAYAEDGEILVGAPAKRQAVTNARNTLFAVKRLIGRRFEEKEVQKDIDLMPYTIAKADNGDAWVEVRGKKIAPPQVSAEVLRKMKKTAEDYLGEEVTEAVITVPAYFNDSQRQATKDAGRIAGLEVKRIINEPTAAALAFGMDKKPGDSKIAVYDLGGGTFDISIIEIADIDGEHQFEVLATNGDTFLGGEDFDQRIIDYIVTEFKKEQGVDLKNDVLALQRLKEAAEKAKIELSSGSQTEVNLPYITADATGPKHLAIKITRAKFESLVEDLIERSIEPCRIALKDAGVKVSDIDDVILVGGQTRMPKVIEKVKEFFGKEPRRDVNPDEAVAVGASIQGGVLQGEVKDVLLLDVTPLSLGIETLGGVMTKLIQKNTTIPTKASQVFSTADDNQSAVTIHVLQGEREMASGNKSLGQFNLSDIPPAPRGMPQIEVTFDIDANGILHVSAKDKATGKENKIKIQANSGLSDEEVERMVRDAAAHAEEDKKAHELVDARNQCDALIHSTKKALAEHGDKIGADDKAKIEAAMKDAEEAIKSGDKDSIEAKSQALAMASQKLGEAMYGQQQAEGGAQAAGAAGGSSKADDADVVDAEFTEVKDKK</sequence>
<keyword id="KW-0067">ATP-binding</keyword>
<keyword id="KW-0143">Chaperone</keyword>
<keyword id="KW-0547">Nucleotide-binding</keyword>
<keyword id="KW-0597">Phosphoprotein</keyword>
<keyword id="KW-1185">Reference proteome</keyword>
<keyword id="KW-0346">Stress response</keyword>
<accession>A1K4C5</accession>